<proteinExistence type="inferred from homology"/>
<gene>
    <name evidence="1" type="primary">RRP3</name>
    <name type="ordered locus">YALI0A12133g</name>
</gene>
<reference key="1">
    <citation type="journal article" date="2004" name="Nature">
        <title>Genome evolution in yeasts.</title>
        <authorList>
            <person name="Dujon B."/>
            <person name="Sherman D."/>
            <person name="Fischer G."/>
            <person name="Durrens P."/>
            <person name="Casaregola S."/>
            <person name="Lafontaine I."/>
            <person name="de Montigny J."/>
            <person name="Marck C."/>
            <person name="Neuveglise C."/>
            <person name="Talla E."/>
            <person name="Goffard N."/>
            <person name="Frangeul L."/>
            <person name="Aigle M."/>
            <person name="Anthouard V."/>
            <person name="Babour A."/>
            <person name="Barbe V."/>
            <person name="Barnay S."/>
            <person name="Blanchin S."/>
            <person name="Beckerich J.-M."/>
            <person name="Beyne E."/>
            <person name="Bleykasten C."/>
            <person name="Boisrame A."/>
            <person name="Boyer J."/>
            <person name="Cattolico L."/>
            <person name="Confanioleri F."/>
            <person name="de Daruvar A."/>
            <person name="Despons L."/>
            <person name="Fabre E."/>
            <person name="Fairhead C."/>
            <person name="Ferry-Dumazet H."/>
            <person name="Groppi A."/>
            <person name="Hantraye F."/>
            <person name="Hennequin C."/>
            <person name="Jauniaux N."/>
            <person name="Joyet P."/>
            <person name="Kachouri R."/>
            <person name="Kerrest A."/>
            <person name="Koszul R."/>
            <person name="Lemaire M."/>
            <person name="Lesur I."/>
            <person name="Ma L."/>
            <person name="Muller H."/>
            <person name="Nicaud J.-M."/>
            <person name="Nikolski M."/>
            <person name="Oztas S."/>
            <person name="Ozier-Kalogeropoulos O."/>
            <person name="Pellenz S."/>
            <person name="Potier S."/>
            <person name="Richard G.-F."/>
            <person name="Straub M.-L."/>
            <person name="Suleau A."/>
            <person name="Swennen D."/>
            <person name="Tekaia F."/>
            <person name="Wesolowski-Louvel M."/>
            <person name="Westhof E."/>
            <person name="Wirth B."/>
            <person name="Zeniou-Meyer M."/>
            <person name="Zivanovic Y."/>
            <person name="Bolotin-Fukuhara M."/>
            <person name="Thierry A."/>
            <person name="Bouchier C."/>
            <person name="Caudron B."/>
            <person name="Scarpelli C."/>
            <person name="Gaillardin C."/>
            <person name="Weissenbach J."/>
            <person name="Wincker P."/>
            <person name="Souciet J.-L."/>
        </authorList>
    </citation>
    <scope>NUCLEOTIDE SEQUENCE [LARGE SCALE GENOMIC DNA]</scope>
    <source>
        <strain>CLIB 122 / E 150</strain>
    </source>
</reference>
<sequence length="480" mass="53192">MAKATEKRVKRAKKEESGSESEDNDAIAQEILDTTKSDNEEEEPKKSSKNYTSVEVDESEEQTKTFKDLGVIDSICETCEELKFTKPTPIQAQSIPYALEGRDIIGLAQTGSGKTAAFAIPVLQSLYENPQPLYCVVLAPTRELAYQISETFEALGSAMGLRTAVVVGGMNMMTQAVALSKKPHVIVATPGRLVDHLENTKGFSLRTLKFLVMDEADRLLDMEFGPSLDKILKVIPRQRNTYLFSATMTSKVEKLQRASLVDPVRVAVSTKYQTADNLLQYMVFCPFKHKDTHLVYLVSENAGNSMIIFARTKSDTQRISLLLRNLGYGAIPLHGDLSQTARLGALNKFKSGSRNILIATDVASRGLDIPAVDLVINYDIPSDSKSYIHRVGRTARAGRAGKSVALVSQYDLELYLRIEGALGKKLDSYPLESEAVMLFSERVAEASRAAIQEMKGEDGTKKRSKFDKKRRRDEMDIGEQ</sequence>
<feature type="chain" id="PRO_0000232280" description="ATP-dependent rRNA helicase RRP3">
    <location>
        <begin position="1"/>
        <end position="480"/>
    </location>
</feature>
<feature type="domain" description="Helicase ATP-binding" evidence="2">
    <location>
        <begin position="95"/>
        <end position="266"/>
    </location>
</feature>
<feature type="domain" description="Helicase C-terminal" evidence="3">
    <location>
        <begin position="277"/>
        <end position="437"/>
    </location>
</feature>
<feature type="region of interest" description="Disordered" evidence="4">
    <location>
        <begin position="1"/>
        <end position="63"/>
    </location>
</feature>
<feature type="region of interest" description="Disordered" evidence="4">
    <location>
        <begin position="450"/>
        <end position="480"/>
    </location>
</feature>
<feature type="short sequence motif" description="Q motif" evidence="5">
    <location>
        <begin position="64"/>
        <end position="92"/>
    </location>
</feature>
<feature type="short sequence motif" description="DEAD box" evidence="5">
    <location>
        <begin position="214"/>
        <end position="217"/>
    </location>
</feature>
<feature type="compositionally biased region" description="Basic and acidic residues" evidence="4">
    <location>
        <begin position="1"/>
        <end position="17"/>
    </location>
</feature>
<feature type="compositionally biased region" description="Basic and acidic residues" evidence="4">
    <location>
        <begin position="33"/>
        <end position="46"/>
    </location>
</feature>
<feature type="compositionally biased region" description="Basic residues" evidence="4">
    <location>
        <begin position="462"/>
        <end position="471"/>
    </location>
</feature>
<feature type="binding site" evidence="2">
    <location>
        <begin position="108"/>
        <end position="115"/>
    </location>
    <ligand>
        <name>ATP</name>
        <dbReference type="ChEBI" id="CHEBI:30616"/>
    </ligand>
</feature>
<dbReference type="EC" id="3.6.4.13" evidence="1"/>
<dbReference type="EMBL" id="CR382127">
    <property type="protein sequence ID" value="CAG83933.1"/>
    <property type="molecule type" value="Genomic_DNA"/>
</dbReference>
<dbReference type="RefSeq" id="XP_500004.1">
    <property type="nucleotide sequence ID" value="XM_500004.1"/>
</dbReference>
<dbReference type="SMR" id="Q6CH58"/>
<dbReference type="FunCoup" id="Q6CH58">
    <property type="interactions" value="1179"/>
</dbReference>
<dbReference type="STRING" id="284591.Q6CH58"/>
<dbReference type="EnsemblFungi" id="CAG83933">
    <property type="protein sequence ID" value="CAG83933"/>
    <property type="gene ID" value="YALI0_A12133g"/>
</dbReference>
<dbReference type="KEGG" id="yli:2906192"/>
<dbReference type="VEuPathDB" id="FungiDB:YALI0_A12133g"/>
<dbReference type="HOGENOM" id="CLU_003041_1_1_1"/>
<dbReference type="InParanoid" id="Q6CH58"/>
<dbReference type="OMA" id="GIGIKCC"/>
<dbReference type="OrthoDB" id="1350at4891"/>
<dbReference type="Proteomes" id="UP000001300">
    <property type="component" value="Chromosome A"/>
</dbReference>
<dbReference type="GO" id="GO:0005634">
    <property type="term" value="C:nucleus"/>
    <property type="evidence" value="ECO:0000318"/>
    <property type="project" value="GO_Central"/>
</dbReference>
<dbReference type="GO" id="GO:0005524">
    <property type="term" value="F:ATP binding"/>
    <property type="evidence" value="ECO:0007669"/>
    <property type="project" value="UniProtKB-KW"/>
</dbReference>
<dbReference type="GO" id="GO:0016887">
    <property type="term" value="F:ATP hydrolysis activity"/>
    <property type="evidence" value="ECO:0007669"/>
    <property type="project" value="RHEA"/>
</dbReference>
<dbReference type="GO" id="GO:0003723">
    <property type="term" value="F:RNA binding"/>
    <property type="evidence" value="ECO:0007669"/>
    <property type="project" value="UniProtKB-KW"/>
</dbReference>
<dbReference type="GO" id="GO:0003724">
    <property type="term" value="F:RNA helicase activity"/>
    <property type="evidence" value="ECO:0007669"/>
    <property type="project" value="UniProtKB-EC"/>
</dbReference>
<dbReference type="GO" id="GO:0006364">
    <property type="term" value="P:rRNA processing"/>
    <property type="evidence" value="ECO:0000318"/>
    <property type="project" value="GO_Central"/>
</dbReference>
<dbReference type="CDD" id="cd17954">
    <property type="entry name" value="DEADc_DDX47"/>
    <property type="match status" value="1"/>
</dbReference>
<dbReference type="CDD" id="cd18787">
    <property type="entry name" value="SF2_C_DEAD"/>
    <property type="match status" value="1"/>
</dbReference>
<dbReference type="FunFam" id="3.40.50.300:FF:000681">
    <property type="entry name" value="probable ATP-dependent RNA helicase DDX47"/>
    <property type="match status" value="1"/>
</dbReference>
<dbReference type="Gene3D" id="3.40.50.300">
    <property type="entry name" value="P-loop containing nucleotide triphosphate hydrolases"/>
    <property type="match status" value="2"/>
</dbReference>
<dbReference type="InterPro" id="IPR044765">
    <property type="entry name" value="DDX47/Rrp3_DEADc"/>
</dbReference>
<dbReference type="InterPro" id="IPR011545">
    <property type="entry name" value="DEAD/DEAH_box_helicase_dom"/>
</dbReference>
<dbReference type="InterPro" id="IPR050079">
    <property type="entry name" value="DEAD_box_RNA_helicase"/>
</dbReference>
<dbReference type="InterPro" id="IPR014001">
    <property type="entry name" value="Helicase_ATP-bd"/>
</dbReference>
<dbReference type="InterPro" id="IPR001650">
    <property type="entry name" value="Helicase_C-like"/>
</dbReference>
<dbReference type="InterPro" id="IPR027417">
    <property type="entry name" value="P-loop_NTPase"/>
</dbReference>
<dbReference type="InterPro" id="IPR000629">
    <property type="entry name" value="RNA-helicase_DEAD-box_CS"/>
</dbReference>
<dbReference type="InterPro" id="IPR014014">
    <property type="entry name" value="RNA_helicase_DEAD_Q_motif"/>
</dbReference>
<dbReference type="PANTHER" id="PTHR47959">
    <property type="entry name" value="ATP-DEPENDENT RNA HELICASE RHLE-RELATED"/>
    <property type="match status" value="1"/>
</dbReference>
<dbReference type="PANTHER" id="PTHR47959:SF20">
    <property type="entry name" value="RNA HELICASE"/>
    <property type="match status" value="1"/>
</dbReference>
<dbReference type="Pfam" id="PF00270">
    <property type="entry name" value="DEAD"/>
    <property type="match status" value="1"/>
</dbReference>
<dbReference type="Pfam" id="PF00271">
    <property type="entry name" value="Helicase_C"/>
    <property type="match status" value="1"/>
</dbReference>
<dbReference type="SMART" id="SM00487">
    <property type="entry name" value="DEXDc"/>
    <property type="match status" value="1"/>
</dbReference>
<dbReference type="SMART" id="SM00490">
    <property type="entry name" value="HELICc"/>
    <property type="match status" value="1"/>
</dbReference>
<dbReference type="SUPFAM" id="SSF52540">
    <property type="entry name" value="P-loop containing nucleoside triphosphate hydrolases"/>
    <property type="match status" value="1"/>
</dbReference>
<dbReference type="PROSITE" id="PS00039">
    <property type="entry name" value="DEAD_ATP_HELICASE"/>
    <property type="match status" value="1"/>
</dbReference>
<dbReference type="PROSITE" id="PS51192">
    <property type="entry name" value="HELICASE_ATP_BIND_1"/>
    <property type="match status" value="1"/>
</dbReference>
<dbReference type="PROSITE" id="PS51194">
    <property type="entry name" value="HELICASE_CTER"/>
    <property type="match status" value="1"/>
</dbReference>
<dbReference type="PROSITE" id="PS51195">
    <property type="entry name" value="Q_MOTIF"/>
    <property type="match status" value="1"/>
</dbReference>
<protein>
    <recommendedName>
        <fullName evidence="5">ATP-dependent rRNA helicase RRP3</fullName>
        <ecNumber evidence="1">3.6.4.13</ecNumber>
    </recommendedName>
</protein>
<organism>
    <name type="scientific">Yarrowia lipolytica (strain CLIB 122 / E 150)</name>
    <name type="common">Yeast</name>
    <name type="synonym">Candida lipolytica</name>
    <dbReference type="NCBI Taxonomy" id="284591"/>
    <lineage>
        <taxon>Eukaryota</taxon>
        <taxon>Fungi</taxon>
        <taxon>Dikarya</taxon>
        <taxon>Ascomycota</taxon>
        <taxon>Saccharomycotina</taxon>
        <taxon>Dipodascomycetes</taxon>
        <taxon>Dipodascales</taxon>
        <taxon>Dipodascales incertae sedis</taxon>
        <taxon>Yarrowia</taxon>
    </lineage>
</organism>
<name>RRP3_YARLI</name>
<evidence type="ECO:0000250" key="1">
    <source>
        <dbReference type="UniProtKB" id="P38712"/>
    </source>
</evidence>
<evidence type="ECO:0000255" key="2">
    <source>
        <dbReference type="PROSITE-ProRule" id="PRU00541"/>
    </source>
</evidence>
<evidence type="ECO:0000255" key="3">
    <source>
        <dbReference type="PROSITE-ProRule" id="PRU00542"/>
    </source>
</evidence>
<evidence type="ECO:0000256" key="4">
    <source>
        <dbReference type="SAM" id="MobiDB-lite"/>
    </source>
</evidence>
<evidence type="ECO:0000305" key="5"/>
<accession>Q6CH58</accession>
<keyword id="KW-0067">ATP-binding</keyword>
<keyword id="KW-0347">Helicase</keyword>
<keyword id="KW-0378">Hydrolase</keyword>
<keyword id="KW-0547">Nucleotide-binding</keyword>
<keyword id="KW-0539">Nucleus</keyword>
<keyword id="KW-1185">Reference proteome</keyword>
<keyword id="KW-0690">Ribosome biogenesis</keyword>
<keyword id="KW-0694">RNA-binding</keyword>
<keyword id="KW-0698">rRNA processing</keyword>
<comment type="function">
    <text evidence="1">ATP-dependent rRNA helicase required for pre-ribosomal RNA processing. Involved in the maturation of the 35S-pre-rRNA and to its cleavage to mature 18S rRNA.</text>
</comment>
<comment type="catalytic activity">
    <reaction evidence="1">
        <text>ATP + H2O = ADP + phosphate + H(+)</text>
        <dbReference type="Rhea" id="RHEA:13065"/>
        <dbReference type="ChEBI" id="CHEBI:15377"/>
        <dbReference type="ChEBI" id="CHEBI:15378"/>
        <dbReference type="ChEBI" id="CHEBI:30616"/>
        <dbReference type="ChEBI" id="CHEBI:43474"/>
        <dbReference type="ChEBI" id="CHEBI:456216"/>
        <dbReference type="EC" id="3.6.4.13"/>
    </reaction>
</comment>
<comment type="subunit">
    <text evidence="1">Interacts with the SSU processome.</text>
</comment>
<comment type="subcellular location">
    <subcellularLocation>
        <location evidence="5">Nucleus</location>
    </subcellularLocation>
</comment>
<comment type="domain">
    <text evidence="5">The Q motif is unique to and characteristic of the DEAD box family of RNA helicases and controls ATP binding and hydrolysis.</text>
</comment>
<comment type="similarity">
    <text evidence="5">Belongs to the DEAD box helicase family. DDX47/RRP3 subfamily.</text>
</comment>